<proteinExistence type="inferred from homology"/>
<reference key="1">
    <citation type="journal article" date="2008" name="BMC Genomics">
        <title>Genomics of an extreme psychrophile, Psychromonas ingrahamii.</title>
        <authorList>
            <person name="Riley M."/>
            <person name="Staley J.T."/>
            <person name="Danchin A."/>
            <person name="Wang T.Z."/>
            <person name="Brettin T.S."/>
            <person name="Hauser L.J."/>
            <person name="Land M.L."/>
            <person name="Thompson L.S."/>
        </authorList>
    </citation>
    <scope>NUCLEOTIDE SEQUENCE [LARGE SCALE GENOMIC DNA]</scope>
    <source>
        <strain>DSM 17664 / CCUG 51855 / 37</strain>
    </source>
</reference>
<gene>
    <name evidence="1" type="primary">serS</name>
    <name type="ordered locus">Ping_1666</name>
</gene>
<sequence length="428" mass="48100">MLDPKFLRNDIEQTALRLASRGYTLDVELLNQLEEKRKILQITTETLQAERNSRSKEVGQAAKRGEDITPLRTEMGLLGERLDSAKEDFALLAEQIKSLAYSMPNLPHESAPLGKDESENVEILKWGEPKKFDFEVKDHVDLGEALDGLDFKSAVKISGSRFIVMRGKIAKLHRALAQYMLDLHTDHHGYTEMYVPYLVNADSLYGTGQLPKFGDDLFNTKPATEEGIGMSLIPTAEVPLTNMSRDMIYDESDLPLKLTAHTPCFRSEAGSYGRDTRGLIRQHQFDKVEMVQFVHPEKSFEALEELTGHAEQVLKNLQLPYRKVVLCTGDMGFGATKTYDLEVWLPAQDQYREISSCSNIGDFQARRLQARFRPTGAKKPELLHTLNGSGLAVGRTLVAVLENYQLEDGSIEIPQVLQQYMGGLTHIG</sequence>
<evidence type="ECO:0000255" key="1">
    <source>
        <dbReference type="HAMAP-Rule" id="MF_00176"/>
    </source>
</evidence>
<dbReference type="EC" id="6.1.1.11" evidence="1"/>
<dbReference type="EMBL" id="CP000510">
    <property type="protein sequence ID" value="ABM03459.1"/>
    <property type="molecule type" value="Genomic_DNA"/>
</dbReference>
<dbReference type="RefSeq" id="WP_011770019.1">
    <property type="nucleotide sequence ID" value="NC_008709.1"/>
</dbReference>
<dbReference type="SMR" id="A1SVE4"/>
<dbReference type="STRING" id="357804.Ping_1666"/>
<dbReference type="KEGG" id="pin:Ping_1666"/>
<dbReference type="eggNOG" id="COG0172">
    <property type="taxonomic scope" value="Bacteria"/>
</dbReference>
<dbReference type="HOGENOM" id="CLU_023797_1_1_6"/>
<dbReference type="OrthoDB" id="9804647at2"/>
<dbReference type="UniPathway" id="UPA00906">
    <property type="reaction ID" value="UER00895"/>
</dbReference>
<dbReference type="Proteomes" id="UP000000639">
    <property type="component" value="Chromosome"/>
</dbReference>
<dbReference type="GO" id="GO:0005737">
    <property type="term" value="C:cytoplasm"/>
    <property type="evidence" value="ECO:0007669"/>
    <property type="project" value="UniProtKB-SubCell"/>
</dbReference>
<dbReference type="GO" id="GO:0005524">
    <property type="term" value="F:ATP binding"/>
    <property type="evidence" value="ECO:0007669"/>
    <property type="project" value="UniProtKB-UniRule"/>
</dbReference>
<dbReference type="GO" id="GO:0004828">
    <property type="term" value="F:serine-tRNA ligase activity"/>
    <property type="evidence" value="ECO:0007669"/>
    <property type="project" value="UniProtKB-UniRule"/>
</dbReference>
<dbReference type="GO" id="GO:0016260">
    <property type="term" value="P:selenocysteine biosynthetic process"/>
    <property type="evidence" value="ECO:0007669"/>
    <property type="project" value="UniProtKB-UniRule"/>
</dbReference>
<dbReference type="GO" id="GO:0006434">
    <property type="term" value="P:seryl-tRNA aminoacylation"/>
    <property type="evidence" value="ECO:0007669"/>
    <property type="project" value="UniProtKB-UniRule"/>
</dbReference>
<dbReference type="CDD" id="cd00770">
    <property type="entry name" value="SerRS_core"/>
    <property type="match status" value="1"/>
</dbReference>
<dbReference type="Gene3D" id="3.30.930.10">
    <property type="entry name" value="Bira Bifunctional Protein, Domain 2"/>
    <property type="match status" value="1"/>
</dbReference>
<dbReference type="Gene3D" id="1.10.287.40">
    <property type="entry name" value="Serine-tRNA synthetase, tRNA binding domain"/>
    <property type="match status" value="1"/>
</dbReference>
<dbReference type="HAMAP" id="MF_00176">
    <property type="entry name" value="Ser_tRNA_synth_type1"/>
    <property type="match status" value="1"/>
</dbReference>
<dbReference type="InterPro" id="IPR002314">
    <property type="entry name" value="aa-tRNA-synt_IIb"/>
</dbReference>
<dbReference type="InterPro" id="IPR006195">
    <property type="entry name" value="aa-tRNA-synth_II"/>
</dbReference>
<dbReference type="InterPro" id="IPR045864">
    <property type="entry name" value="aa-tRNA-synth_II/BPL/LPL"/>
</dbReference>
<dbReference type="InterPro" id="IPR002317">
    <property type="entry name" value="Ser-tRNA-ligase_type_1"/>
</dbReference>
<dbReference type="InterPro" id="IPR015866">
    <property type="entry name" value="Ser-tRNA-synth_1_N"/>
</dbReference>
<dbReference type="InterPro" id="IPR042103">
    <property type="entry name" value="SerRS_1_N_sf"/>
</dbReference>
<dbReference type="InterPro" id="IPR033729">
    <property type="entry name" value="SerRS_core"/>
</dbReference>
<dbReference type="InterPro" id="IPR010978">
    <property type="entry name" value="tRNA-bd_arm"/>
</dbReference>
<dbReference type="NCBIfam" id="TIGR00414">
    <property type="entry name" value="serS"/>
    <property type="match status" value="1"/>
</dbReference>
<dbReference type="PANTHER" id="PTHR43697:SF1">
    <property type="entry name" value="SERINE--TRNA LIGASE"/>
    <property type="match status" value="1"/>
</dbReference>
<dbReference type="PANTHER" id="PTHR43697">
    <property type="entry name" value="SERYL-TRNA SYNTHETASE"/>
    <property type="match status" value="1"/>
</dbReference>
<dbReference type="Pfam" id="PF02403">
    <property type="entry name" value="Seryl_tRNA_N"/>
    <property type="match status" value="1"/>
</dbReference>
<dbReference type="Pfam" id="PF00587">
    <property type="entry name" value="tRNA-synt_2b"/>
    <property type="match status" value="1"/>
</dbReference>
<dbReference type="PIRSF" id="PIRSF001529">
    <property type="entry name" value="Ser-tRNA-synth_IIa"/>
    <property type="match status" value="1"/>
</dbReference>
<dbReference type="PRINTS" id="PR00981">
    <property type="entry name" value="TRNASYNTHSER"/>
</dbReference>
<dbReference type="SUPFAM" id="SSF55681">
    <property type="entry name" value="Class II aaRS and biotin synthetases"/>
    <property type="match status" value="1"/>
</dbReference>
<dbReference type="SUPFAM" id="SSF46589">
    <property type="entry name" value="tRNA-binding arm"/>
    <property type="match status" value="1"/>
</dbReference>
<dbReference type="PROSITE" id="PS50862">
    <property type="entry name" value="AA_TRNA_LIGASE_II"/>
    <property type="match status" value="1"/>
</dbReference>
<feature type="chain" id="PRO_1000019784" description="Serine--tRNA ligase">
    <location>
        <begin position="1"/>
        <end position="428"/>
    </location>
</feature>
<feature type="binding site" evidence="1">
    <location>
        <begin position="235"/>
        <end position="237"/>
    </location>
    <ligand>
        <name>L-serine</name>
        <dbReference type="ChEBI" id="CHEBI:33384"/>
    </ligand>
</feature>
<feature type="binding site" evidence="1">
    <location>
        <begin position="266"/>
        <end position="268"/>
    </location>
    <ligand>
        <name>ATP</name>
        <dbReference type="ChEBI" id="CHEBI:30616"/>
    </ligand>
</feature>
<feature type="binding site" evidence="1">
    <location>
        <position position="289"/>
    </location>
    <ligand>
        <name>L-serine</name>
        <dbReference type="ChEBI" id="CHEBI:33384"/>
    </ligand>
</feature>
<feature type="binding site" evidence="1">
    <location>
        <begin position="353"/>
        <end position="356"/>
    </location>
    <ligand>
        <name>ATP</name>
        <dbReference type="ChEBI" id="CHEBI:30616"/>
    </ligand>
</feature>
<feature type="binding site" evidence="1">
    <location>
        <position position="389"/>
    </location>
    <ligand>
        <name>L-serine</name>
        <dbReference type="ChEBI" id="CHEBI:33384"/>
    </ligand>
</feature>
<organism>
    <name type="scientific">Psychromonas ingrahamii (strain DSM 17664 / CCUG 51855 / 37)</name>
    <dbReference type="NCBI Taxonomy" id="357804"/>
    <lineage>
        <taxon>Bacteria</taxon>
        <taxon>Pseudomonadati</taxon>
        <taxon>Pseudomonadota</taxon>
        <taxon>Gammaproteobacteria</taxon>
        <taxon>Alteromonadales</taxon>
        <taxon>Psychromonadaceae</taxon>
        <taxon>Psychromonas</taxon>
    </lineage>
</organism>
<name>SYS_PSYIN</name>
<accession>A1SVE4</accession>
<keyword id="KW-0030">Aminoacyl-tRNA synthetase</keyword>
<keyword id="KW-0067">ATP-binding</keyword>
<keyword id="KW-0963">Cytoplasm</keyword>
<keyword id="KW-0436">Ligase</keyword>
<keyword id="KW-0547">Nucleotide-binding</keyword>
<keyword id="KW-0648">Protein biosynthesis</keyword>
<keyword id="KW-1185">Reference proteome</keyword>
<protein>
    <recommendedName>
        <fullName evidence="1">Serine--tRNA ligase</fullName>
        <ecNumber evidence="1">6.1.1.11</ecNumber>
    </recommendedName>
    <alternativeName>
        <fullName evidence="1">Seryl-tRNA synthetase</fullName>
        <shortName evidence="1">SerRS</shortName>
    </alternativeName>
    <alternativeName>
        <fullName evidence="1">Seryl-tRNA(Ser/Sec) synthetase</fullName>
    </alternativeName>
</protein>
<comment type="function">
    <text evidence="1">Catalyzes the attachment of serine to tRNA(Ser). Is also able to aminoacylate tRNA(Sec) with serine, to form the misacylated tRNA L-seryl-tRNA(Sec), which will be further converted into selenocysteinyl-tRNA(Sec).</text>
</comment>
<comment type="catalytic activity">
    <reaction evidence="1">
        <text>tRNA(Ser) + L-serine + ATP = L-seryl-tRNA(Ser) + AMP + diphosphate + H(+)</text>
        <dbReference type="Rhea" id="RHEA:12292"/>
        <dbReference type="Rhea" id="RHEA-COMP:9669"/>
        <dbReference type="Rhea" id="RHEA-COMP:9703"/>
        <dbReference type="ChEBI" id="CHEBI:15378"/>
        <dbReference type="ChEBI" id="CHEBI:30616"/>
        <dbReference type="ChEBI" id="CHEBI:33019"/>
        <dbReference type="ChEBI" id="CHEBI:33384"/>
        <dbReference type="ChEBI" id="CHEBI:78442"/>
        <dbReference type="ChEBI" id="CHEBI:78533"/>
        <dbReference type="ChEBI" id="CHEBI:456215"/>
        <dbReference type="EC" id="6.1.1.11"/>
    </reaction>
</comment>
<comment type="catalytic activity">
    <reaction evidence="1">
        <text>tRNA(Sec) + L-serine + ATP = L-seryl-tRNA(Sec) + AMP + diphosphate + H(+)</text>
        <dbReference type="Rhea" id="RHEA:42580"/>
        <dbReference type="Rhea" id="RHEA-COMP:9742"/>
        <dbReference type="Rhea" id="RHEA-COMP:10128"/>
        <dbReference type="ChEBI" id="CHEBI:15378"/>
        <dbReference type="ChEBI" id="CHEBI:30616"/>
        <dbReference type="ChEBI" id="CHEBI:33019"/>
        <dbReference type="ChEBI" id="CHEBI:33384"/>
        <dbReference type="ChEBI" id="CHEBI:78442"/>
        <dbReference type="ChEBI" id="CHEBI:78533"/>
        <dbReference type="ChEBI" id="CHEBI:456215"/>
        <dbReference type="EC" id="6.1.1.11"/>
    </reaction>
</comment>
<comment type="pathway">
    <text evidence="1">Aminoacyl-tRNA biosynthesis; selenocysteinyl-tRNA(Sec) biosynthesis; L-seryl-tRNA(Sec) from L-serine and tRNA(Sec): step 1/1.</text>
</comment>
<comment type="subunit">
    <text evidence="1">Homodimer. The tRNA molecule binds across the dimer.</text>
</comment>
<comment type="subcellular location">
    <subcellularLocation>
        <location evidence="1">Cytoplasm</location>
    </subcellularLocation>
</comment>
<comment type="domain">
    <text evidence="1">Consists of two distinct domains, a catalytic core and a N-terminal extension that is involved in tRNA binding.</text>
</comment>
<comment type="similarity">
    <text evidence="1">Belongs to the class-II aminoacyl-tRNA synthetase family. Type-1 seryl-tRNA synthetase subfamily.</text>
</comment>